<comment type="function">
    <text evidence="2">Immunophilin protein with PPIase and co-chaperone activities. Component of unligated steroid receptors heterocomplexes through interaction with heat-shock protein 90 (HSP90). Plays a role in the intracellular trafficking of heterooligomeric forms of steroid hormone receptors maintaining the complex into the cytoplasm when unliganded. Acts as a regulator of Akt/AKT1 activity by promoting the interaction between Akt/AKT1 and PHLPP1, thereby enhancing dephosphorylation and subsequent activation of Akt/AKT1. Interacts with IKBKE and IKBKB which facilitates IKK complex assembly leading to increased IKBKE and IKBKB kinase activity, NF-kappaB activation, and IFN production.</text>
</comment>
<comment type="catalytic activity">
    <reaction>
        <text>[protein]-peptidylproline (omega=180) = [protein]-peptidylproline (omega=0)</text>
        <dbReference type="Rhea" id="RHEA:16237"/>
        <dbReference type="Rhea" id="RHEA-COMP:10747"/>
        <dbReference type="Rhea" id="RHEA-COMP:10748"/>
        <dbReference type="ChEBI" id="CHEBI:83833"/>
        <dbReference type="ChEBI" id="CHEBI:83834"/>
        <dbReference type="EC" id="5.2.1.8"/>
    </reaction>
</comment>
<comment type="activity regulation">
    <text evidence="1">Inhibited by FK506 but not cyclosporin.</text>
</comment>
<comment type="subunit">
    <text evidence="1">Part of a heteromultimeric cytoplasmic complex with HSP90AA1, HSPA1A/HSPA1B and steroid receptors. Upon ligand binding dissociates from the complex and FKBP4 takes its place. Interacts with functionally mature heterooligomeric progesterone receptor complexes along with HSP90 and TEBP (By similarity). Interacts with IFI44L; this interaction modulates the kinase activity of IKBKB and IKBKE (By similarity). Interacts with IKBKB and IKBKE (By similarity).</text>
</comment>
<comment type="subcellular location">
    <subcellularLocation>
        <location evidence="1">Cytoplasm</location>
    </subcellularLocation>
    <subcellularLocation>
        <location evidence="1">Nucleus</location>
    </subcellularLocation>
</comment>
<accession>Q5RF88</accession>
<organism>
    <name type="scientific">Pongo abelii</name>
    <name type="common">Sumatran orangutan</name>
    <name type="synonym">Pongo pygmaeus abelii</name>
    <dbReference type="NCBI Taxonomy" id="9601"/>
    <lineage>
        <taxon>Eukaryota</taxon>
        <taxon>Metazoa</taxon>
        <taxon>Chordata</taxon>
        <taxon>Craniata</taxon>
        <taxon>Vertebrata</taxon>
        <taxon>Euteleostomi</taxon>
        <taxon>Mammalia</taxon>
        <taxon>Eutheria</taxon>
        <taxon>Euarchontoglires</taxon>
        <taxon>Primates</taxon>
        <taxon>Haplorrhini</taxon>
        <taxon>Catarrhini</taxon>
        <taxon>Hominidae</taxon>
        <taxon>Pongo</taxon>
    </lineage>
</organism>
<gene>
    <name type="primary">FKBP5</name>
</gene>
<reference key="1">
    <citation type="submission" date="2004-11" db="EMBL/GenBank/DDBJ databases">
        <authorList>
            <consortium name="The German cDNA consortium"/>
        </authorList>
    </citation>
    <scope>NUCLEOTIDE SEQUENCE [LARGE SCALE MRNA]</scope>
    <source>
        <tissue>Kidney</tissue>
    </source>
</reference>
<feature type="chain" id="PRO_0000075326" description="Peptidyl-prolyl cis-trans isomerase FKBP5">
    <location>
        <begin position="1"/>
        <end position="457"/>
    </location>
</feature>
<feature type="domain" description="PPIase FKBP-type 1" evidence="3">
    <location>
        <begin position="50"/>
        <end position="138"/>
    </location>
</feature>
<feature type="domain" description="PPIase FKBP-type 2" evidence="3">
    <location>
        <begin position="165"/>
        <end position="251"/>
    </location>
</feature>
<feature type="repeat" description="TPR 1">
    <location>
        <begin position="268"/>
        <end position="301"/>
    </location>
</feature>
<feature type="repeat" description="TPR 2">
    <location>
        <begin position="317"/>
        <end position="350"/>
    </location>
</feature>
<feature type="repeat" description="TPR 3">
    <location>
        <begin position="351"/>
        <end position="384"/>
    </location>
</feature>
<feature type="region of interest" description="Disordered" evidence="4">
    <location>
        <begin position="1"/>
        <end position="26"/>
    </location>
</feature>
<feature type="region of interest" description="Disordered" evidence="4">
    <location>
        <begin position="420"/>
        <end position="457"/>
    </location>
</feature>
<feature type="modified residue" description="N-acetylmethionine" evidence="2">
    <location>
        <position position="1"/>
    </location>
</feature>
<feature type="modified residue" description="Phosphoserine" evidence="2">
    <location>
        <position position="13"/>
    </location>
</feature>
<feature type="modified residue" description="Phosphoserine" evidence="2">
    <location>
        <position position="445"/>
    </location>
</feature>
<evidence type="ECO:0000250" key="1"/>
<evidence type="ECO:0000250" key="2">
    <source>
        <dbReference type="UniProtKB" id="Q13451"/>
    </source>
</evidence>
<evidence type="ECO:0000255" key="3">
    <source>
        <dbReference type="PROSITE-ProRule" id="PRU00277"/>
    </source>
</evidence>
<evidence type="ECO:0000256" key="4">
    <source>
        <dbReference type="SAM" id="MobiDB-lite"/>
    </source>
</evidence>
<dbReference type="EC" id="5.2.1.8"/>
<dbReference type="EMBL" id="CR857273">
    <property type="protein sequence ID" value="CAH89569.1"/>
    <property type="molecule type" value="mRNA"/>
</dbReference>
<dbReference type="RefSeq" id="NP_001124689.1">
    <property type="nucleotide sequence ID" value="NM_001131217.1"/>
</dbReference>
<dbReference type="SMR" id="Q5RF88"/>
<dbReference type="STRING" id="9601.ENSPPYP00000018489"/>
<dbReference type="GeneID" id="100171536"/>
<dbReference type="KEGG" id="pon:100171536"/>
<dbReference type="CTD" id="2289"/>
<dbReference type="eggNOG" id="KOG0543">
    <property type="taxonomic scope" value="Eukaryota"/>
</dbReference>
<dbReference type="InParanoid" id="Q5RF88"/>
<dbReference type="OrthoDB" id="433738at2759"/>
<dbReference type="Proteomes" id="UP000001595">
    <property type="component" value="Unplaced"/>
</dbReference>
<dbReference type="GO" id="GO:0005737">
    <property type="term" value="C:cytoplasm"/>
    <property type="evidence" value="ECO:0007669"/>
    <property type="project" value="UniProtKB-SubCell"/>
</dbReference>
<dbReference type="GO" id="GO:0005634">
    <property type="term" value="C:nucleus"/>
    <property type="evidence" value="ECO:0007669"/>
    <property type="project" value="UniProtKB-SubCell"/>
</dbReference>
<dbReference type="GO" id="GO:0003755">
    <property type="term" value="F:peptidyl-prolyl cis-trans isomerase activity"/>
    <property type="evidence" value="ECO:0000250"/>
    <property type="project" value="UniProtKB"/>
</dbReference>
<dbReference type="GO" id="GO:0061077">
    <property type="term" value="P:chaperone-mediated protein folding"/>
    <property type="evidence" value="ECO:0000250"/>
    <property type="project" value="UniProtKB"/>
</dbReference>
<dbReference type="FunFam" id="1.25.40.10:FF:000008">
    <property type="entry name" value="Peptidylprolyl isomerase"/>
    <property type="match status" value="1"/>
</dbReference>
<dbReference type="FunFam" id="3.10.50.40:FF:000011">
    <property type="entry name" value="Peptidylprolyl isomerase"/>
    <property type="match status" value="1"/>
</dbReference>
<dbReference type="FunFam" id="3.10.50.40:FF:000013">
    <property type="entry name" value="Peptidylprolyl isomerase"/>
    <property type="match status" value="1"/>
</dbReference>
<dbReference type="Gene3D" id="3.10.50.40">
    <property type="match status" value="2"/>
</dbReference>
<dbReference type="Gene3D" id="1.25.40.10">
    <property type="entry name" value="Tetratricopeptide repeat domain"/>
    <property type="match status" value="1"/>
</dbReference>
<dbReference type="InterPro" id="IPR050754">
    <property type="entry name" value="FKBP4/5/8-like"/>
</dbReference>
<dbReference type="InterPro" id="IPR046357">
    <property type="entry name" value="PPIase_dom_sf"/>
</dbReference>
<dbReference type="InterPro" id="IPR001179">
    <property type="entry name" value="PPIase_FKBP_dom"/>
</dbReference>
<dbReference type="InterPro" id="IPR011990">
    <property type="entry name" value="TPR-like_helical_dom_sf"/>
</dbReference>
<dbReference type="InterPro" id="IPR019734">
    <property type="entry name" value="TPR_rpt"/>
</dbReference>
<dbReference type="PANTHER" id="PTHR46512">
    <property type="entry name" value="PEPTIDYLPROLYL ISOMERASE"/>
    <property type="match status" value="1"/>
</dbReference>
<dbReference type="PANTHER" id="PTHR46512:SF9">
    <property type="entry name" value="PEPTIDYLPROLYL ISOMERASE"/>
    <property type="match status" value="1"/>
</dbReference>
<dbReference type="Pfam" id="PF00254">
    <property type="entry name" value="FKBP_C"/>
    <property type="match status" value="2"/>
</dbReference>
<dbReference type="Pfam" id="PF00515">
    <property type="entry name" value="TPR_1"/>
    <property type="match status" value="1"/>
</dbReference>
<dbReference type="Pfam" id="PF13181">
    <property type="entry name" value="TPR_8"/>
    <property type="match status" value="1"/>
</dbReference>
<dbReference type="SMART" id="SM00028">
    <property type="entry name" value="TPR"/>
    <property type="match status" value="2"/>
</dbReference>
<dbReference type="SUPFAM" id="SSF54534">
    <property type="entry name" value="FKBP-like"/>
    <property type="match status" value="2"/>
</dbReference>
<dbReference type="SUPFAM" id="SSF48452">
    <property type="entry name" value="TPR-like"/>
    <property type="match status" value="1"/>
</dbReference>
<dbReference type="PROSITE" id="PS50059">
    <property type="entry name" value="FKBP_PPIASE"/>
    <property type="match status" value="2"/>
</dbReference>
<dbReference type="PROSITE" id="PS50005">
    <property type="entry name" value="TPR"/>
    <property type="match status" value="3"/>
</dbReference>
<dbReference type="PROSITE" id="PS50293">
    <property type="entry name" value="TPR_REGION"/>
    <property type="match status" value="1"/>
</dbReference>
<name>FKBP5_PONAB</name>
<proteinExistence type="evidence at transcript level"/>
<protein>
    <recommendedName>
        <fullName>Peptidyl-prolyl cis-trans isomerase FKBP5</fullName>
        <shortName>PPIase FKBP5</shortName>
        <ecNumber>5.2.1.8</ecNumber>
    </recommendedName>
    <alternativeName>
        <fullName>FK506-binding protein 5</fullName>
        <shortName>FKBP-5</shortName>
    </alternativeName>
    <alternativeName>
        <fullName>Rotamase</fullName>
    </alternativeName>
</protein>
<keyword id="KW-0007">Acetylation</keyword>
<keyword id="KW-0143">Chaperone</keyword>
<keyword id="KW-0963">Cytoplasm</keyword>
<keyword id="KW-0413">Isomerase</keyword>
<keyword id="KW-0539">Nucleus</keyword>
<keyword id="KW-0597">Phosphoprotein</keyword>
<keyword id="KW-1185">Reference proteome</keyword>
<keyword id="KW-0677">Repeat</keyword>
<keyword id="KW-0697">Rotamase</keyword>
<keyword id="KW-0802">TPR repeat</keyword>
<sequence length="457" mass="51026">MTTDEGAKNNGESPTATVAEQGEDITSKKDRGVLKIVKRVGNGEETPMIGDKVYVHYKGKLSNGKKFDSSHDRNEPFVFSLGKGQVIKAWDIGVATMKKGEICHLLCKPEYAYGSAGSLPKIPSNATLFFEIELLDFKGEDLFEDGGIIRRTKRKGEGYSNPNEGATVEIHLEGRCGGRMFDCRDVAFTVGEGEDHVIPIGIDKALEKMQREEQCILYLGPRYGFGEAGKPKFGIEPNAELIYEVTLKSFEKAKESWEMDTKEKLEQAAIVKEKGTVYFKGGKYMQAVIQYGKIVSWLEMEYGLSEKESKASESFLLAAFLNLAMCYSKLREYTKAVECCDKALGLDSANGKGLYRRGEAQLLMNEFESAKGDFEKVLEVNPQNKAARLQISMCQKKAKEHNERDRRIYANMFKKFAEQDAKEEANKAMGKKTSEGVTNEKGTDSQAMEEEKPEGHV</sequence>